<evidence type="ECO:0000255" key="1"/>
<evidence type="ECO:0000303" key="2">
    <source>
    </source>
</evidence>
<evidence type="ECO:0000305" key="3"/>
<sequence length="588" mass="67096">MDLARKEFLRGNGLAAGKMNISIDLDTNYAELVLNVGRVTLGENNRKKMKDCQLRKQQNENVSRAVCALLNSGGGVIKAEVENKGYSYKKDGIGLDLENSFSNMLPFVPNFLDFMQNGNYFHIFVKSWSLETSGPQIATLSSSLYKRDVTSAKVMNASAALEFLKDMEKTGGRAYLRPEFPAKRACVDVQEESNMEALAADFFNRTELGYKEKLTFTESTHVEIKNFSTEKLLQRITEILPQYVSAFANTDGGYLFVGLNEDKEVIGFKAEKSYLTKLEEVTKNSIGKLPVHHFCVEKGTINYLCKFLGVYDKGRLCGYVYALRVERFCCAVFAKKPDSWHVKDNRVKQLTEKEWIQFMVDSEPVCEELPSPASTSSPVSQSYPLREYINFKIQPLRYHLPGLSEKITCAPKTFCRNLFSQHEGLKQLICEEMGSVNKGSLIFSRSWSLDLGLQENHKVLCDALLISQDKPPVLYTFHMVQDEEFKDYSTQTAQTLKQKLAKIGGYTKKVCVMTKIFYLSPEGKTSCQYDLNSQVIYPESYYWTTAQTMKDLEKALSNILPKENQIFLFVCLFRFCLFVCWFVCFFLR</sequence>
<name>SN12L_HUMAN</name>
<organism>
    <name type="scientific">Homo sapiens</name>
    <name type="common">Human</name>
    <dbReference type="NCBI Taxonomy" id="9606"/>
    <lineage>
        <taxon>Eukaryota</taxon>
        <taxon>Metazoa</taxon>
        <taxon>Chordata</taxon>
        <taxon>Craniata</taxon>
        <taxon>Vertebrata</taxon>
        <taxon>Euteleostomi</taxon>
        <taxon>Mammalia</taxon>
        <taxon>Eutheria</taxon>
        <taxon>Euarchontoglires</taxon>
        <taxon>Primates</taxon>
        <taxon>Haplorrhini</taxon>
        <taxon>Catarrhini</taxon>
        <taxon>Hominidae</taxon>
        <taxon>Homo</taxon>
    </lineage>
</organism>
<protein>
    <recommendedName>
        <fullName>Schlafen family member 12-like</fullName>
    </recommendedName>
</protein>
<proteinExistence type="evidence at transcript level"/>
<gene>
    <name type="primary">SLFN12L</name>
    <name type="synonym">SLFN5</name>
</gene>
<keyword id="KW-0025">Alternative splicing</keyword>
<keyword id="KW-0472">Membrane</keyword>
<keyword id="KW-1185">Reference proteome</keyword>
<keyword id="KW-0812">Transmembrane</keyword>
<keyword id="KW-1133">Transmembrane helix</keyword>
<reference key="1">
    <citation type="journal article" date="2004" name="Nat. Genet.">
        <title>Complete sequencing and characterization of 21,243 full-length human cDNAs.</title>
        <authorList>
            <person name="Ota T."/>
            <person name="Suzuki Y."/>
            <person name="Nishikawa T."/>
            <person name="Otsuki T."/>
            <person name="Sugiyama T."/>
            <person name="Irie R."/>
            <person name="Wakamatsu A."/>
            <person name="Hayashi K."/>
            <person name="Sato H."/>
            <person name="Nagai K."/>
            <person name="Kimura K."/>
            <person name="Makita H."/>
            <person name="Sekine M."/>
            <person name="Obayashi M."/>
            <person name="Nishi T."/>
            <person name="Shibahara T."/>
            <person name="Tanaka T."/>
            <person name="Ishii S."/>
            <person name="Yamamoto J."/>
            <person name="Saito K."/>
            <person name="Kawai Y."/>
            <person name="Isono Y."/>
            <person name="Nakamura Y."/>
            <person name="Nagahari K."/>
            <person name="Murakami K."/>
            <person name="Yasuda T."/>
            <person name="Iwayanagi T."/>
            <person name="Wagatsuma M."/>
            <person name="Shiratori A."/>
            <person name="Sudo H."/>
            <person name="Hosoiri T."/>
            <person name="Kaku Y."/>
            <person name="Kodaira H."/>
            <person name="Kondo H."/>
            <person name="Sugawara M."/>
            <person name="Takahashi M."/>
            <person name="Kanda K."/>
            <person name="Yokoi T."/>
            <person name="Furuya T."/>
            <person name="Kikkawa E."/>
            <person name="Omura Y."/>
            <person name="Abe K."/>
            <person name="Kamihara K."/>
            <person name="Katsuta N."/>
            <person name="Sato K."/>
            <person name="Tanikawa M."/>
            <person name="Yamazaki M."/>
            <person name="Ninomiya K."/>
            <person name="Ishibashi T."/>
            <person name="Yamashita H."/>
            <person name="Murakawa K."/>
            <person name="Fujimori K."/>
            <person name="Tanai H."/>
            <person name="Kimata M."/>
            <person name="Watanabe M."/>
            <person name="Hiraoka S."/>
            <person name="Chiba Y."/>
            <person name="Ishida S."/>
            <person name="Ono Y."/>
            <person name="Takiguchi S."/>
            <person name="Watanabe S."/>
            <person name="Yosida M."/>
            <person name="Hotuta T."/>
            <person name="Kusano J."/>
            <person name="Kanehori K."/>
            <person name="Takahashi-Fujii A."/>
            <person name="Hara H."/>
            <person name="Tanase T.-O."/>
            <person name="Nomura Y."/>
            <person name="Togiya S."/>
            <person name="Komai F."/>
            <person name="Hara R."/>
            <person name="Takeuchi K."/>
            <person name="Arita M."/>
            <person name="Imose N."/>
            <person name="Musashino K."/>
            <person name="Yuuki H."/>
            <person name="Oshima A."/>
            <person name="Sasaki N."/>
            <person name="Aotsuka S."/>
            <person name="Yoshikawa Y."/>
            <person name="Matsunawa H."/>
            <person name="Ichihara T."/>
            <person name="Shiohata N."/>
            <person name="Sano S."/>
            <person name="Moriya S."/>
            <person name="Momiyama H."/>
            <person name="Satoh N."/>
            <person name="Takami S."/>
            <person name="Terashima Y."/>
            <person name="Suzuki O."/>
            <person name="Nakagawa S."/>
            <person name="Senoh A."/>
            <person name="Mizoguchi H."/>
            <person name="Goto Y."/>
            <person name="Shimizu F."/>
            <person name="Wakebe H."/>
            <person name="Hishigaki H."/>
            <person name="Watanabe T."/>
            <person name="Sugiyama A."/>
            <person name="Takemoto M."/>
            <person name="Kawakami B."/>
            <person name="Yamazaki M."/>
            <person name="Watanabe K."/>
            <person name="Kumagai A."/>
            <person name="Itakura S."/>
            <person name="Fukuzumi Y."/>
            <person name="Fujimori Y."/>
            <person name="Komiyama M."/>
            <person name="Tashiro H."/>
            <person name="Tanigami A."/>
            <person name="Fujiwara T."/>
            <person name="Ono T."/>
            <person name="Yamada K."/>
            <person name="Fujii Y."/>
            <person name="Ozaki K."/>
            <person name="Hirao M."/>
            <person name="Ohmori Y."/>
            <person name="Kawabata A."/>
            <person name="Hikiji T."/>
            <person name="Kobatake N."/>
            <person name="Inagaki H."/>
            <person name="Ikema Y."/>
            <person name="Okamoto S."/>
            <person name="Okitani R."/>
            <person name="Kawakami T."/>
            <person name="Noguchi S."/>
            <person name="Itoh T."/>
            <person name="Shigeta K."/>
            <person name="Senba T."/>
            <person name="Matsumura K."/>
            <person name="Nakajima Y."/>
            <person name="Mizuno T."/>
            <person name="Morinaga M."/>
            <person name="Sasaki M."/>
            <person name="Togashi T."/>
            <person name="Oyama M."/>
            <person name="Hata H."/>
            <person name="Watanabe M."/>
            <person name="Komatsu T."/>
            <person name="Mizushima-Sugano J."/>
            <person name="Satoh T."/>
            <person name="Shirai Y."/>
            <person name="Takahashi Y."/>
            <person name="Nakagawa K."/>
            <person name="Okumura K."/>
            <person name="Nagase T."/>
            <person name="Nomura N."/>
            <person name="Kikuchi H."/>
            <person name="Masuho Y."/>
            <person name="Yamashita R."/>
            <person name="Nakai K."/>
            <person name="Yada T."/>
            <person name="Nakamura Y."/>
            <person name="Ohara O."/>
            <person name="Isogai T."/>
            <person name="Sugano S."/>
        </authorList>
    </citation>
    <scope>NUCLEOTIDE SEQUENCE [LARGE SCALE MRNA] (ISOFORM 2)</scope>
</reference>
<reference key="2">
    <citation type="journal article" date="2006" name="Nature">
        <title>DNA sequence of human chromosome 17 and analysis of rearrangement in the human lineage.</title>
        <authorList>
            <person name="Zody M.C."/>
            <person name="Garber M."/>
            <person name="Adams D.J."/>
            <person name="Sharpe T."/>
            <person name="Harrow J."/>
            <person name="Lupski J.R."/>
            <person name="Nicholson C."/>
            <person name="Searle S.M."/>
            <person name="Wilming L."/>
            <person name="Young S.K."/>
            <person name="Abouelleil A."/>
            <person name="Allen N.R."/>
            <person name="Bi W."/>
            <person name="Bloom T."/>
            <person name="Borowsky M.L."/>
            <person name="Bugalter B.E."/>
            <person name="Butler J."/>
            <person name="Chang J.L."/>
            <person name="Chen C.-K."/>
            <person name="Cook A."/>
            <person name="Corum B."/>
            <person name="Cuomo C.A."/>
            <person name="de Jong P.J."/>
            <person name="DeCaprio D."/>
            <person name="Dewar K."/>
            <person name="FitzGerald M."/>
            <person name="Gilbert J."/>
            <person name="Gibson R."/>
            <person name="Gnerre S."/>
            <person name="Goldstein S."/>
            <person name="Grafham D.V."/>
            <person name="Grocock R."/>
            <person name="Hafez N."/>
            <person name="Hagopian D.S."/>
            <person name="Hart E."/>
            <person name="Norman C.H."/>
            <person name="Humphray S."/>
            <person name="Jaffe D.B."/>
            <person name="Jones M."/>
            <person name="Kamal M."/>
            <person name="Khodiyar V.K."/>
            <person name="LaButti K."/>
            <person name="Laird G."/>
            <person name="Lehoczky J."/>
            <person name="Liu X."/>
            <person name="Lokyitsang T."/>
            <person name="Loveland J."/>
            <person name="Lui A."/>
            <person name="Macdonald P."/>
            <person name="Major J.E."/>
            <person name="Matthews L."/>
            <person name="Mauceli E."/>
            <person name="McCarroll S.A."/>
            <person name="Mihalev A.H."/>
            <person name="Mudge J."/>
            <person name="Nguyen C."/>
            <person name="Nicol R."/>
            <person name="O'Leary S.B."/>
            <person name="Osoegawa K."/>
            <person name="Schwartz D.C."/>
            <person name="Shaw-Smith C."/>
            <person name="Stankiewicz P."/>
            <person name="Steward C."/>
            <person name="Swarbreck D."/>
            <person name="Venkataraman V."/>
            <person name="Whittaker C.A."/>
            <person name="Yang X."/>
            <person name="Zimmer A.R."/>
            <person name="Bradley A."/>
            <person name="Hubbard T."/>
            <person name="Birren B.W."/>
            <person name="Rogers J."/>
            <person name="Lander E.S."/>
            <person name="Nusbaum C."/>
        </authorList>
    </citation>
    <scope>NUCLEOTIDE SEQUENCE [LARGE SCALE GENOMIC DNA]</scope>
</reference>
<reference key="3">
    <citation type="journal article" date="2003" name="J. Med. Genet.">
        <title>Heterogeneity of breakpoints in non-LCR-mediated large constitutional deletions of the 17q11.2 NF1 tumour suppressor region.</title>
        <authorList>
            <person name="Kehrer-Sawatzki H."/>
            <person name="Tinschert S."/>
            <person name="Jenne D.E."/>
        </authorList>
    </citation>
    <scope>IDENTIFICATION (ISOFORM 1)</scope>
</reference>
<feature type="chain" id="PRO_0000336097" description="Schlafen family member 12-like">
    <location>
        <begin position="1"/>
        <end position="588"/>
    </location>
</feature>
<feature type="transmembrane region" description="Helical" evidence="1">
    <location>
        <begin position="566"/>
        <end position="586"/>
    </location>
</feature>
<feature type="splice variant" id="VSP_040137" description="In isoform 2." evidence="2">
    <original>MDLA</original>
    <variation>MAMKIMEKIRNVFHCEAHRILYICESQFLRNFI</variation>
    <location>
        <begin position="1"/>
        <end position="4"/>
    </location>
</feature>
<feature type="sequence variant" id="VAR_043551" description="In dbSNP:rs12451679.">
    <original>L</original>
    <variation>S</variation>
    <location>
        <position position="275"/>
    </location>
</feature>
<feature type="sequence variant" id="VAR_043552" description="In dbSNP:rs2304967.">
    <original>A</original>
    <variation>G</variation>
    <location>
        <position position="373"/>
    </location>
</feature>
<feature type="sequence variant" id="VAR_043553" description="In dbSNP:rs777316634.">
    <original>C</original>
    <variation>Y</variation>
    <location>
        <position position="430"/>
    </location>
</feature>
<feature type="sequence variant" id="VAR_043554" description="In dbSNP:rs3744372.">
    <original>Y</original>
    <variation>S</variation>
    <location>
        <position position="518"/>
    </location>
</feature>
<feature type="sequence conflict" description="In Ref. 1; AK172761." evidence="3" ref="1">
    <original>F</original>
    <variation>S</variation>
    <location sequence="Q6IEE8-2">
        <position position="13"/>
    </location>
</feature>
<comment type="subcellular location">
    <subcellularLocation>
        <location>Membrane</location>
        <topology>Single-pass membrane protein</topology>
    </subcellularLocation>
</comment>
<comment type="alternative products">
    <event type="alternative splicing"/>
    <isoform>
        <id>Q6IEE8-1</id>
        <name>1</name>
        <sequence type="displayed"/>
    </isoform>
    <isoform>
        <id>Q6IEE8-2</id>
        <name>2</name>
        <sequence type="described" ref="VSP_040137"/>
    </isoform>
</comment>
<comment type="similarity">
    <text evidence="3">Belongs to the Schlafen family.</text>
</comment>
<comment type="sequence caution" evidence="3">
    <conflict type="erroneous gene model prediction">
        <sequence resource="EMBL-CDS" id="CAD80167"/>
    </conflict>
</comment>
<accession>Q6IEE8</accession>
<accession>F5H6G3</accession>
<dbReference type="EMBL" id="AK172761">
    <property type="status" value="NOT_ANNOTATED_CDS"/>
    <property type="molecule type" value="mRNA"/>
</dbReference>
<dbReference type="EMBL" id="AC015911">
    <property type="status" value="NOT_ANNOTATED_CDS"/>
    <property type="molecule type" value="Genomic_DNA"/>
</dbReference>
<dbReference type="EMBL" id="BN000147">
    <property type="protein sequence ID" value="CAD80167.1"/>
    <property type="status" value="ALT_SEQ"/>
    <property type="molecule type" value="mRNA"/>
</dbReference>
<dbReference type="RefSeq" id="NP_001182719.1">
    <property type="nucleotide sequence ID" value="NM_001195790.1"/>
</dbReference>
<dbReference type="RefSeq" id="XP_016879494.1">
    <property type="nucleotide sequence ID" value="XM_017024005.1"/>
</dbReference>
<dbReference type="RefSeq" id="XP_016879495.1">
    <property type="nucleotide sequence ID" value="XM_017024006.1"/>
</dbReference>
<dbReference type="RefSeq" id="XP_016879496.1">
    <property type="nucleotide sequence ID" value="XM_017024007.1"/>
</dbReference>
<dbReference type="SMR" id="Q6IEE8"/>
<dbReference type="BioGRID" id="131188">
    <property type="interactions" value="3"/>
</dbReference>
<dbReference type="FunCoup" id="Q6IEE8">
    <property type="interactions" value="1"/>
</dbReference>
<dbReference type="IntAct" id="Q6IEE8">
    <property type="interactions" value="3"/>
</dbReference>
<dbReference type="STRING" id="9606.ENSP00000354412"/>
<dbReference type="iPTMnet" id="Q6IEE8"/>
<dbReference type="PhosphoSitePlus" id="Q6IEE8"/>
<dbReference type="BioMuta" id="SLFN12L"/>
<dbReference type="DMDM" id="313104287"/>
<dbReference type="jPOST" id="Q6IEE8"/>
<dbReference type="MassIVE" id="Q6IEE8"/>
<dbReference type="PaxDb" id="9606-ENSP00000437635"/>
<dbReference type="PeptideAtlas" id="Q6IEE8"/>
<dbReference type="ProteomicsDB" id="27182"/>
<dbReference type="ProteomicsDB" id="66410">
    <molecule id="Q6IEE8-1"/>
</dbReference>
<dbReference type="ProteomicsDB" id="66411">
    <molecule id="Q6IEE8-2"/>
</dbReference>
<dbReference type="Antibodypedia" id="7340">
    <property type="antibodies" value="65 antibodies from 12 providers"/>
</dbReference>
<dbReference type="DNASU" id="100506736"/>
<dbReference type="GeneID" id="100506736"/>
<dbReference type="KEGG" id="hsa:100506736"/>
<dbReference type="UCSC" id="uc002hjn.4">
    <molecule id="Q6IEE8-1"/>
    <property type="organism name" value="human"/>
</dbReference>
<dbReference type="AGR" id="HGNC:33920"/>
<dbReference type="CTD" id="100506736"/>
<dbReference type="DisGeNET" id="100506736"/>
<dbReference type="GeneCards" id="SLFN12L"/>
<dbReference type="HGNC" id="HGNC:33920">
    <property type="gene designation" value="SLFN12L"/>
</dbReference>
<dbReference type="MIM" id="614956">
    <property type="type" value="gene"/>
</dbReference>
<dbReference type="neXtProt" id="NX_Q6IEE8"/>
<dbReference type="PharmGKB" id="PA162403886"/>
<dbReference type="VEuPathDB" id="HostDB:ENSG00000205045"/>
<dbReference type="eggNOG" id="ENOG502RU3F">
    <property type="taxonomic scope" value="Eukaryota"/>
</dbReference>
<dbReference type="HOGENOM" id="CLU_034558_0_0_1"/>
<dbReference type="InParanoid" id="Q6IEE8"/>
<dbReference type="OMA" id="VKMGGYT"/>
<dbReference type="OrthoDB" id="9627223at2759"/>
<dbReference type="PAN-GO" id="Q6IEE8">
    <property type="GO annotations" value="0 GO annotations based on evolutionary models"/>
</dbReference>
<dbReference type="TreeFam" id="TF337168"/>
<dbReference type="PathwayCommons" id="Q6IEE8"/>
<dbReference type="SignaLink" id="Q6IEE8"/>
<dbReference type="BioGRID-ORCS" id="100506736">
    <property type="hits" value="16 hits in 1139 CRISPR screens"/>
</dbReference>
<dbReference type="ChiTaRS" id="SLFN12L">
    <property type="organism name" value="human"/>
</dbReference>
<dbReference type="GenomeRNAi" id="100506736"/>
<dbReference type="Pharos" id="Q6IEE8">
    <property type="development level" value="Tbio"/>
</dbReference>
<dbReference type="PRO" id="PR:Q6IEE8"/>
<dbReference type="Proteomes" id="UP000005640">
    <property type="component" value="Chromosome 17"/>
</dbReference>
<dbReference type="RNAct" id="Q6IEE8">
    <property type="molecule type" value="protein"/>
</dbReference>
<dbReference type="ExpressionAtlas" id="Q6IEE8">
    <property type="expression patterns" value="baseline and differential"/>
</dbReference>
<dbReference type="GO" id="GO:0016020">
    <property type="term" value="C:membrane"/>
    <property type="evidence" value="ECO:0007669"/>
    <property type="project" value="UniProtKB-SubCell"/>
</dbReference>
<dbReference type="FunFam" id="3.30.950.30:FF:000001">
    <property type="entry name" value="Schlafen family member 14"/>
    <property type="match status" value="1"/>
</dbReference>
<dbReference type="Gene3D" id="3.30.950.30">
    <property type="entry name" value="Schlafen, AAA domain"/>
    <property type="match status" value="1"/>
</dbReference>
<dbReference type="InterPro" id="IPR031450">
    <property type="entry name" value="Poxin-SLFN/SLFN_N"/>
</dbReference>
<dbReference type="InterPro" id="IPR029684">
    <property type="entry name" value="Schlafen"/>
</dbReference>
<dbReference type="InterPro" id="IPR007421">
    <property type="entry name" value="Schlafen_AlbA_2_dom"/>
</dbReference>
<dbReference type="InterPro" id="IPR038461">
    <property type="entry name" value="Schlafen_AlbA_2_dom_sf"/>
</dbReference>
<dbReference type="InterPro" id="IPR048729">
    <property type="entry name" value="SLFN_GTPase-like"/>
</dbReference>
<dbReference type="PANTHER" id="PTHR12155">
    <property type="entry name" value="SCHLAFEN"/>
    <property type="match status" value="1"/>
</dbReference>
<dbReference type="PANTHER" id="PTHR12155:SF46">
    <property type="entry name" value="SCHLAFEN FAMILY MEMBER 12-LIKE"/>
    <property type="match status" value="1"/>
</dbReference>
<dbReference type="Pfam" id="PF17057">
    <property type="entry name" value="B3R"/>
    <property type="match status" value="1"/>
</dbReference>
<dbReference type="Pfam" id="PF04326">
    <property type="entry name" value="SLFN_AlbA_2"/>
    <property type="match status" value="1"/>
</dbReference>
<dbReference type="Pfam" id="PF21026">
    <property type="entry name" value="SLFN_GTPase-like"/>
    <property type="match status" value="1"/>
</dbReference>